<protein>
    <recommendedName>
        <fullName evidence="4">D-glycero-alpha-D-manno-heptose-1,7-bisphosphate 7-phosphatase</fullName>
        <ecNumber evidence="3">3.1.3.83</ecNumber>
    </recommendedName>
    <alternativeName>
        <fullName>D,D-heptose 1,7-bisphosphate phosphatase</fullName>
        <shortName>HBP phosphatase</shortName>
    </alternativeName>
</protein>
<proteinExistence type="evidence at protein level"/>
<organism>
    <name type="scientific">Campylobacter jejuni subsp. jejuni serotype O:2 (strain ATCC 700819 / NCTC 11168)</name>
    <dbReference type="NCBI Taxonomy" id="192222"/>
    <lineage>
        <taxon>Bacteria</taxon>
        <taxon>Pseudomonadati</taxon>
        <taxon>Campylobacterota</taxon>
        <taxon>Epsilonproteobacteria</taxon>
        <taxon>Campylobacterales</taxon>
        <taxon>Campylobacteraceae</taxon>
        <taxon>Campylobacter</taxon>
    </lineage>
</organism>
<comment type="function">
    <text evidence="3">Converts the D-glycero-alpha-D-manno-heptose 1,7-bisphosphate intermediate into D-glycero-alpha-D-manno-heptose 1-phosphate by removing the phosphate group at the C-7 position.</text>
</comment>
<comment type="catalytic activity">
    <reaction evidence="3">
        <text>D-glycero-alpha-D-manno-heptose 1,7-bisphosphate + H2O = D-glycero-alpha-D-manno-heptose 1-phosphate + phosphate</text>
        <dbReference type="Rhea" id="RHEA:28522"/>
        <dbReference type="ChEBI" id="CHEBI:15377"/>
        <dbReference type="ChEBI" id="CHEBI:43474"/>
        <dbReference type="ChEBI" id="CHEBI:60207"/>
        <dbReference type="ChEBI" id="CHEBI:61574"/>
        <dbReference type="EC" id="3.1.3.83"/>
    </reaction>
</comment>
<comment type="cofactor">
    <cofactor evidence="1">
        <name>Mg(2+)</name>
        <dbReference type="ChEBI" id="CHEBI:18420"/>
    </cofactor>
</comment>
<comment type="cofactor">
    <cofactor evidence="1">
        <name>Zn(2+)</name>
        <dbReference type="ChEBI" id="CHEBI:29105"/>
    </cofactor>
</comment>
<comment type="biophysicochemical properties">
    <kinetics>
        <KM evidence="3">186 uM for D-glycero-alpha-D-manno-heptose 1,7-bisphosphate (at pH 7.4)</KM>
        <text evidence="3">kcat is 0.12 sec(-1) for D-glycero-alpha-D-manno-heptose 1,7-bisphosphate.</text>
    </kinetics>
</comment>
<comment type="pathway">
    <text evidence="3">Nucleotide-sugar biosynthesis; GDP-D-glycero-alpha-D-manno-heptose biosynthesis; GDP-D-glycero-alpha-D-manno-heptose from D-glycero-alpha-D-manno-heptose 7-phosphate: step 2/3.</text>
</comment>
<comment type="pathway">
    <text evidence="6">Capsule biogenesis; capsule polysaccharide biosynthesis.</text>
</comment>
<comment type="pathway">
    <text>Nucleotide-sugar biosynthesis; ADP-L-glycero-beta-D-manno-heptose biosynthesis; ADP-L-glycero-beta-D-manno-heptose from D-glycero-beta-D-manno-heptose 7-phosphate: step 2/4.</text>
</comment>
<comment type="pathway">
    <text>Bacterial outer membrane biogenesis; LOS core biosynthesis.</text>
</comment>
<comment type="subunit">
    <text evidence="1">Monomer.</text>
</comment>
<comment type="subcellular location">
    <subcellularLocation>
        <location evidence="1">Cytoplasm</location>
    </subcellularLocation>
</comment>
<comment type="similarity">
    <text evidence="5">Belongs to the GmhB family.</text>
</comment>
<comment type="sequence caution" evidence="5">
    <conflict type="erroneous initiation">
        <sequence resource="EMBL-CDS" id="AAR82885"/>
    </conflict>
    <text>Extended N-terminus.</text>
</comment>
<comment type="sequence caution" evidence="5">
    <conflict type="erroneous initiation">
        <sequence resource="EMBL-CDS" id="AAR99167"/>
    </conflict>
    <text>Extended N-terminus.</text>
</comment>
<comment type="sequence caution" evidence="5">
    <conflict type="erroneous initiation">
        <sequence resource="EMBL-CDS" id="CAL35267"/>
    </conflict>
    <text>Extended N-terminus.</text>
</comment>
<name>GMHBA_CAMJE</name>
<reference key="1">
    <citation type="submission" date="2004-01" db="EMBL/GenBank/DDBJ databases">
        <authorList>
            <person name="Gilbert M."/>
        </authorList>
    </citation>
    <scope>NUCLEOTIDE SEQUENCE [GENOMIC DNA]</scope>
    <source>
        <strain>ATCC 43446 / MK104 / Serotype O:19</strain>
    </source>
</reference>
<reference key="2">
    <citation type="journal article" date="2004" name="Infect. Immun.">
        <title>Evidence for acquisition of the lipooligosaccharide biosynthesis locus in Campylobacter jejuni GB11, a strain isolated from a patient with Guillain-Barre syndrome, by horizontal exchange.</title>
        <authorList>
            <person name="Gilbert M."/>
            <person name="Godschalk P.C."/>
            <person name="Karwaski M.-F."/>
            <person name="Ang C.W."/>
            <person name="Van Belkum A."/>
            <person name="Li J."/>
            <person name="Wakarchuk W.W."/>
            <person name="Endtz H.P."/>
        </authorList>
    </citation>
    <scope>NUCLEOTIDE SEQUENCE [GENOMIC DNA]</scope>
    <source>
        <strain>GB11</strain>
    </source>
</reference>
<reference key="3">
    <citation type="journal article" date="2000" name="Nature">
        <title>The genome sequence of the food-borne pathogen Campylobacter jejuni reveals hypervariable sequences.</title>
        <authorList>
            <person name="Parkhill J."/>
            <person name="Wren B.W."/>
            <person name="Mungall K.L."/>
            <person name="Ketley J.M."/>
            <person name="Churcher C.M."/>
            <person name="Basham D."/>
            <person name="Chillingworth T."/>
            <person name="Davies R.M."/>
            <person name="Feltwell T."/>
            <person name="Holroyd S."/>
            <person name="Jagels K."/>
            <person name="Karlyshev A.V."/>
            <person name="Moule S."/>
            <person name="Pallen M.J."/>
            <person name="Penn C.W."/>
            <person name="Quail M.A."/>
            <person name="Rajandream M.A."/>
            <person name="Rutherford K.M."/>
            <person name="van Vliet A.H.M."/>
            <person name="Whitehead S."/>
            <person name="Barrell B.G."/>
        </authorList>
    </citation>
    <scope>NUCLEOTIDE SEQUENCE [LARGE SCALE GENOMIC DNA]</scope>
    <source>
        <strain>ATCC 700819 / NCTC 11168</strain>
    </source>
</reference>
<reference key="4">
    <citation type="journal article" date="2002" name="Microbiology">
        <title>Novel pathways for biosynthesis of nucleotide-activated glycero-manno-heptose precursors of bacterial glycoproteins and cell surface polysaccharides.</title>
        <authorList>
            <person name="Valvano M.A."/>
            <person name="Messner P."/>
            <person name="Kosma P."/>
        </authorList>
    </citation>
    <scope>BIOSYNTHESIS OF NUCLEOTIDE-ACTIVATED GLYCERO-MANNO-HEPTOSE</scope>
</reference>
<reference key="5">
    <citation type="journal article" date="2019" name="Biochemistry">
        <title>Biosynthesis of GDP-d-glycero-alpha-d-manno-heptose for the Capsular Polysaccharide of Campylobacter jejuni.</title>
        <authorList>
            <person name="Huddleston J.P."/>
            <person name="Raushel F.M."/>
        </authorList>
    </citation>
    <scope>FUNCTION</scope>
    <scope>CATALYTIC ACTIVITY</scope>
    <scope>BIOPHYSICOCHEMICAL PROPERTIES</scope>
    <scope>PATHWAY</scope>
    <source>
        <strain evidence="4">ATCC 700819 / NCTC 11168</strain>
    </source>
</reference>
<gene>
    <name type="primary">gmhB</name>
    <name type="ordered locus">Cj1152c</name>
</gene>
<evidence type="ECO:0000250" key="1"/>
<evidence type="ECO:0000250" key="2">
    <source>
        <dbReference type="UniProtKB" id="Q7WG29"/>
    </source>
</evidence>
<evidence type="ECO:0000269" key="3">
    <source>
    </source>
</evidence>
<evidence type="ECO:0000303" key="4">
    <source>
    </source>
</evidence>
<evidence type="ECO:0000305" key="5"/>
<evidence type="ECO:0000305" key="6">
    <source>
    </source>
</evidence>
<dbReference type="EC" id="3.1.3.83" evidence="3"/>
<dbReference type="EMBL" id="AF167344">
    <property type="protein sequence ID" value="AAR99167.1"/>
    <property type="status" value="ALT_INIT"/>
    <property type="molecule type" value="Genomic_DNA"/>
</dbReference>
<dbReference type="EMBL" id="AY422197">
    <property type="protein sequence ID" value="AAR82885.1"/>
    <property type="status" value="ALT_INIT"/>
    <property type="molecule type" value="Genomic_DNA"/>
</dbReference>
<dbReference type="EMBL" id="AL111168">
    <property type="protein sequence ID" value="CAL35267.1"/>
    <property type="status" value="ALT_INIT"/>
    <property type="molecule type" value="Genomic_DNA"/>
</dbReference>
<dbReference type="PIR" id="B81320">
    <property type="entry name" value="B81320"/>
</dbReference>
<dbReference type="RefSeq" id="YP_002344543.1">
    <property type="nucleotide sequence ID" value="NC_002163.1"/>
</dbReference>
<dbReference type="SMR" id="Q6TG07"/>
<dbReference type="IntAct" id="Q6TG07">
    <property type="interactions" value="9"/>
</dbReference>
<dbReference type="STRING" id="192222.Cj1152c"/>
<dbReference type="PaxDb" id="192222-Cj1152c"/>
<dbReference type="EnsemblBacteria" id="CAL35267">
    <property type="protein sequence ID" value="CAL35267"/>
    <property type="gene ID" value="Cj1152c"/>
</dbReference>
<dbReference type="GeneID" id="905442"/>
<dbReference type="KEGG" id="cje:Cj1152c"/>
<dbReference type="PATRIC" id="fig|192222.6.peg.1133"/>
<dbReference type="eggNOG" id="COG0241">
    <property type="taxonomic scope" value="Bacteria"/>
</dbReference>
<dbReference type="HOGENOM" id="CLU_085077_3_1_7"/>
<dbReference type="OrthoDB" id="9814110at2"/>
<dbReference type="STRENDA-DB" id="1AJETE">
    <property type="experiment" value="Characterization of Cj1152"/>
</dbReference>
<dbReference type="UniPathway" id="UPA00356">
    <property type="reaction ID" value="UER00438"/>
</dbReference>
<dbReference type="UniPathway" id="UPA00543">
    <property type="reaction ID" value="UER00607"/>
</dbReference>
<dbReference type="UniPathway" id="UPA00934"/>
<dbReference type="UniPathway" id="UPA00976"/>
<dbReference type="Proteomes" id="UP000000799">
    <property type="component" value="Chromosome"/>
</dbReference>
<dbReference type="GO" id="GO:0005737">
    <property type="term" value="C:cytoplasm"/>
    <property type="evidence" value="ECO:0007669"/>
    <property type="project" value="UniProtKB-SubCell"/>
</dbReference>
<dbReference type="GO" id="GO:0034200">
    <property type="term" value="F:D-glycero-beta-D-manno-heptose 1,7-bisphosphate 7-phosphatase activity"/>
    <property type="evidence" value="ECO:0000250"/>
    <property type="project" value="UniProtKB"/>
</dbReference>
<dbReference type="GO" id="GO:0000287">
    <property type="term" value="F:magnesium ion binding"/>
    <property type="evidence" value="ECO:0000250"/>
    <property type="project" value="UniProtKB"/>
</dbReference>
<dbReference type="GO" id="GO:0008270">
    <property type="term" value="F:zinc ion binding"/>
    <property type="evidence" value="ECO:0000250"/>
    <property type="project" value="UniProtKB"/>
</dbReference>
<dbReference type="GO" id="GO:0097171">
    <property type="term" value="P:ADP-L-glycero-beta-D-manno-heptose biosynthetic process"/>
    <property type="evidence" value="ECO:0007669"/>
    <property type="project" value="UniProtKB-UniPathway"/>
</dbReference>
<dbReference type="GO" id="GO:0045227">
    <property type="term" value="P:capsule polysaccharide biosynthetic process"/>
    <property type="evidence" value="ECO:0007669"/>
    <property type="project" value="UniProtKB-UniPathway"/>
</dbReference>
<dbReference type="CDD" id="cd07503">
    <property type="entry name" value="HAD_HisB-N"/>
    <property type="match status" value="1"/>
</dbReference>
<dbReference type="Gene3D" id="3.40.50.1000">
    <property type="entry name" value="HAD superfamily/HAD-like"/>
    <property type="match status" value="1"/>
</dbReference>
<dbReference type="InterPro" id="IPR036412">
    <property type="entry name" value="HAD-like_sf"/>
</dbReference>
<dbReference type="InterPro" id="IPR006549">
    <property type="entry name" value="HAD-SF_hydro_IIIA"/>
</dbReference>
<dbReference type="InterPro" id="IPR023214">
    <property type="entry name" value="HAD_sf"/>
</dbReference>
<dbReference type="InterPro" id="IPR004446">
    <property type="entry name" value="Heptose_bisP_phosphatase"/>
</dbReference>
<dbReference type="InterPro" id="IPR006543">
    <property type="entry name" value="Histidinol-phos"/>
</dbReference>
<dbReference type="InterPro" id="IPR013954">
    <property type="entry name" value="PNK3P"/>
</dbReference>
<dbReference type="NCBIfam" id="TIGR00213">
    <property type="entry name" value="GmhB_yaeD"/>
    <property type="match status" value="1"/>
</dbReference>
<dbReference type="NCBIfam" id="TIGR01662">
    <property type="entry name" value="HAD-SF-IIIA"/>
    <property type="match status" value="1"/>
</dbReference>
<dbReference type="NCBIfam" id="TIGR01656">
    <property type="entry name" value="Histidinol-ppas"/>
    <property type="match status" value="1"/>
</dbReference>
<dbReference type="PANTHER" id="PTHR42891">
    <property type="entry name" value="D-GLYCERO-BETA-D-MANNO-HEPTOSE-1,7-BISPHOSPHATE 7-PHOSPHATASE"/>
    <property type="match status" value="1"/>
</dbReference>
<dbReference type="PANTHER" id="PTHR42891:SF1">
    <property type="entry name" value="D-GLYCERO-BETA-D-MANNO-HEPTOSE-1,7-BISPHOSPHATE 7-PHOSPHATASE"/>
    <property type="match status" value="1"/>
</dbReference>
<dbReference type="Pfam" id="PF08645">
    <property type="entry name" value="PNK3P"/>
    <property type="match status" value="1"/>
</dbReference>
<dbReference type="PIRSF" id="PIRSF004682">
    <property type="entry name" value="GmhB"/>
    <property type="match status" value="1"/>
</dbReference>
<dbReference type="SUPFAM" id="SSF56784">
    <property type="entry name" value="HAD-like"/>
    <property type="match status" value="1"/>
</dbReference>
<feature type="chain" id="PRO_0000209386" description="D-glycero-alpha-D-manno-heptose-1,7-bisphosphate 7-phosphatase">
    <location>
        <begin position="1"/>
        <end position="172"/>
    </location>
</feature>
<feature type="active site" description="Nucleophile" evidence="1">
    <location>
        <position position="9"/>
    </location>
</feature>
<feature type="active site" description="Proton donor" evidence="1">
    <location>
        <position position="11"/>
    </location>
</feature>
<feature type="binding site" evidence="1">
    <location>
        <begin position="9"/>
        <end position="11"/>
    </location>
    <ligand>
        <name>substrate</name>
    </ligand>
</feature>
<feature type="binding site" evidence="1">
    <location>
        <position position="9"/>
    </location>
    <ligand>
        <name>Mg(2+)</name>
        <dbReference type="ChEBI" id="CHEBI:18420"/>
    </ligand>
</feature>
<feature type="binding site" evidence="1">
    <location>
        <position position="11"/>
    </location>
    <ligand>
        <name>Mg(2+)</name>
        <dbReference type="ChEBI" id="CHEBI:18420"/>
    </ligand>
</feature>
<feature type="binding site" evidence="1">
    <location>
        <begin position="17"/>
        <end position="20"/>
    </location>
    <ligand>
        <name>substrate</name>
    </ligand>
</feature>
<feature type="binding site" evidence="1">
    <location>
        <begin position="51"/>
        <end position="54"/>
    </location>
    <ligand>
        <name>substrate</name>
    </ligand>
</feature>
<feature type="binding site" evidence="2">
    <location>
        <position position="90"/>
    </location>
    <ligand>
        <name>Zn(2+)</name>
        <dbReference type="ChEBI" id="CHEBI:29105"/>
    </ligand>
</feature>
<feature type="binding site" evidence="2">
    <location>
        <position position="92"/>
    </location>
    <ligand>
        <name>Zn(2+)</name>
        <dbReference type="ChEBI" id="CHEBI:29105"/>
    </ligand>
</feature>
<feature type="binding site" evidence="2">
    <location>
        <position position="96"/>
    </location>
    <ligand>
        <name>Zn(2+)</name>
        <dbReference type="ChEBI" id="CHEBI:29105"/>
    </ligand>
</feature>
<feature type="binding site" evidence="2">
    <location>
        <position position="98"/>
    </location>
    <ligand>
        <name>Zn(2+)</name>
        <dbReference type="ChEBI" id="CHEBI:29105"/>
    </ligand>
</feature>
<feature type="binding site" evidence="1">
    <location>
        <begin position="99"/>
        <end position="100"/>
    </location>
    <ligand>
        <name>substrate</name>
    </ligand>
</feature>
<feature type="binding site" evidence="1">
    <location>
        <position position="125"/>
    </location>
    <ligand>
        <name>Mg(2+)</name>
        <dbReference type="ChEBI" id="CHEBI:18420"/>
    </ligand>
</feature>
<feature type="site" description="Stabilizes the phosphoryl group" evidence="1">
    <location>
        <position position="51"/>
    </location>
</feature>
<feature type="site" description="Contributes to substrate recognition" evidence="1">
    <location>
        <position position="99"/>
    </location>
</feature>
<feature type="site" description="Stabilizes the phosphoryl group" evidence="1">
    <location>
        <position position="100"/>
    </location>
</feature>
<feature type="sequence conflict" description="In Ref. 1; AAR99167." evidence="5" ref="1">
    <original>D</original>
    <variation>N</variation>
    <location>
        <position position="137"/>
    </location>
</feature>
<feature type="sequence conflict" description="In Ref. 1; AAR99167 and 2; AAR82885." evidence="5" ref="1 2">
    <original>N</original>
    <variation>S</variation>
    <location>
        <position position="165"/>
    </location>
</feature>
<keyword id="KW-0972">Capsule biogenesis/degradation</keyword>
<keyword id="KW-0119">Carbohydrate metabolism</keyword>
<keyword id="KW-0963">Cytoplasm</keyword>
<keyword id="KW-0378">Hydrolase</keyword>
<keyword id="KW-0460">Magnesium</keyword>
<keyword id="KW-0479">Metal-binding</keyword>
<keyword id="KW-1185">Reference proteome</keyword>
<keyword id="KW-0862">Zinc</keyword>
<accession>Q6TG07</accession>
<accession>Q0P9A4</accession>
<accession>Q7BPS1</accession>
<accession>Q9PNE3</accession>
<sequence>MKTKALFLDRDGVINIDKKYVYKIEDFEFCDGIFELCRYFLARNYLLFIATNQSGIARGYYKESDFFKLCDYMLKEFAKQDIKIDKIYHCPHLEGCECRKPKAGMLLKAKDEFDLDMKNSIFIGDNLSDMQAGLNADIGTLILVNEEKKEGDFFRQFKNLKEILNFFKEKDI</sequence>